<organism>
    <name type="scientific">Lysinibacillus sphaericus (strain C3-41)</name>
    <dbReference type="NCBI Taxonomy" id="444177"/>
    <lineage>
        <taxon>Bacteria</taxon>
        <taxon>Bacillati</taxon>
        <taxon>Bacillota</taxon>
        <taxon>Bacilli</taxon>
        <taxon>Bacillales</taxon>
        <taxon>Bacillaceae</taxon>
        <taxon>Lysinibacillus</taxon>
    </lineage>
</organism>
<comment type="function">
    <text evidence="1">Converts heme B (protoheme IX) to heme O by substitution of the vinyl group on carbon 2 of heme B porphyrin ring with a hydroxyethyl farnesyl side group.</text>
</comment>
<comment type="catalytic activity">
    <reaction evidence="1">
        <text>heme b + (2E,6E)-farnesyl diphosphate + H2O = Fe(II)-heme o + diphosphate</text>
        <dbReference type="Rhea" id="RHEA:28070"/>
        <dbReference type="ChEBI" id="CHEBI:15377"/>
        <dbReference type="ChEBI" id="CHEBI:33019"/>
        <dbReference type="ChEBI" id="CHEBI:60344"/>
        <dbReference type="ChEBI" id="CHEBI:60530"/>
        <dbReference type="ChEBI" id="CHEBI:175763"/>
        <dbReference type="EC" id="2.5.1.141"/>
    </reaction>
</comment>
<comment type="pathway">
    <text evidence="1">Porphyrin-containing compound metabolism; heme O biosynthesis; heme O from protoheme: step 1/1.</text>
</comment>
<comment type="subunit">
    <text evidence="1">Interacts with CtaA.</text>
</comment>
<comment type="subcellular location">
    <subcellularLocation>
        <location evidence="1">Cell membrane</location>
        <topology evidence="1">Multi-pass membrane protein</topology>
    </subcellularLocation>
</comment>
<comment type="miscellaneous">
    <text evidence="1">Carbon 2 of the heme B porphyrin ring is defined according to the Fischer nomenclature.</text>
</comment>
<comment type="similarity">
    <text evidence="1">Belongs to the UbiA prenyltransferase family. Protoheme IX farnesyltransferase subfamily.</text>
</comment>
<comment type="sequence caution" evidence="3">
    <conflict type="erroneous initiation">
        <sequence resource="EMBL-CDS" id="ACA41140"/>
    </conflict>
</comment>
<reference key="1">
    <citation type="journal article" date="2008" name="J. Bacteriol.">
        <title>Complete genome sequence of the mosquitocidal bacterium Bacillus sphaericus C3-41 and comparison with those of closely related Bacillus species.</title>
        <authorList>
            <person name="Hu X."/>
            <person name="Fan W."/>
            <person name="Han B."/>
            <person name="Liu H."/>
            <person name="Zheng D."/>
            <person name="Li Q."/>
            <person name="Dong W."/>
            <person name="Yan J."/>
            <person name="Gao M."/>
            <person name="Berry C."/>
            <person name="Yuan Z."/>
        </authorList>
    </citation>
    <scope>NUCLEOTIDE SEQUENCE [LARGE SCALE GENOMIC DNA]</scope>
    <source>
        <strain>C3-41</strain>
    </source>
</reference>
<proteinExistence type="inferred from homology"/>
<protein>
    <recommendedName>
        <fullName evidence="1">Protoheme IX farnesyltransferase 2</fullName>
        <ecNumber evidence="1">2.5.1.141</ecNumber>
    </recommendedName>
    <alternativeName>
        <fullName evidence="1">Heme B farnesyltransferase 2</fullName>
    </alternativeName>
    <alternativeName>
        <fullName evidence="1">Heme O synthase 2</fullName>
    </alternativeName>
</protein>
<feature type="chain" id="PRO_0000346056" description="Protoheme IX farnesyltransferase 2">
    <location>
        <begin position="1"/>
        <end position="316"/>
    </location>
</feature>
<feature type="transmembrane region" description="Helical" evidence="1">
    <location>
        <begin position="62"/>
        <end position="82"/>
    </location>
</feature>
<feature type="transmembrane region" description="Helical" evidence="1">
    <location>
        <begin position="117"/>
        <end position="137"/>
    </location>
</feature>
<feature type="transmembrane region" description="Helical" evidence="1">
    <location>
        <begin position="163"/>
        <end position="183"/>
    </location>
</feature>
<feature type="transmembrane region" description="Helical" evidence="1">
    <location>
        <begin position="188"/>
        <end position="208"/>
    </location>
</feature>
<feature type="transmembrane region" description="Helical" evidence="1">
    <location>
        <begin position="231"/>
        <end position="251"/>
    </location>
</feature>
<feature type="transmembrane region" description="Helical" evidence="1">
    <location>
        <begin position="252"/>
        <end position="272"/>
    </location>
</feature>
<feature type="transmembrane region" description="Helical" evidence="1">
    <location>
        <begin position="293"/>
        <end position="313"/>
    </location>
</feature>
<feature type="region of interest" description="Disordered" evidence="2">
    <location>
        <begin position="1"/>
        <end position="24"/>
    </location>
</feature>
<feature type="compositionally biased region" description="Polar residues" evidence="2">
    <location>
        <begin position="1"/>
        <end position="15"/>
    </location>
</feature>
<keyword id="KW-1003">Cell membrane</keyword>
<keyword id="KW-0350">Heme biosynthesis</keyword>
<keyword id="KW-0472">Membrane</keyword>
<keyword id="KW-0808">Transferase</keyword>
<keyword id="KW-0812">Transmembrane</keyword>
<keyword id="KW-1133">Transmembrane helix</keyword>
<evidence type="ECO:0000255" key="1">
    <source>
        <dbReference type="HAMAP-Rule" id="MF_00154"/>
    </source>
</evidence>
<evidence type="ECO:0000256" key="2">
    <source>
        <dbReference type="SAM" id="MobiDB-lite"/>
    </source>
</evidence>
<evidence type="ECO:0000305" key="3"/>
<sequence>MEQNLNSEQKPQSSAKPRGKSSRSTILAQTVKTGIIKSNLIPMWAGLTLGMYKNKMTFIDNIPEMIFSTVGSALVIGAAGAFNNVYDRDIDAIMPRTQSRPTVTGEMSAKSTLSLAIVMLIIGLAVLALASPLAAAFGLLGVFLYVVPYTMWTKRRTIYNTEIGSISGAVPPLIGWSAVSTDITHPAIARFIFVMVIWQMPHFYAIAIRKRVDYEAASVPMLPVVKGMRRTYYQTNFYLILLILSSFLFGSLSVGIMLVALLLSIAWLVMSIYGYHSNKDQVKWATKMFVFSLFHMTILFTTVIVYSLVGVIFKLY</sequence>
<name>COXX2_LYSSC</name>
<gene>
    <name evidence="1" type="primary">ctaB2</name>
    <name type="ordered locus">Bsph_3656</name>
</gene>
<accession>B1HST2</accession>
<dbReference type="EC" id="2.5.1.141" evidence="1"/>
<dbReference type="EMBL" id="CP000817">
    <property type="protein sequence ID" value="ACA41140.1"/>
    <property type="status" value="ALT_INIT"/>
    <property type="molecule type" value="Genomic_DNA"/>
</dbReference>
<dbReference type="RefSeq" id="WP_031416984.1">
    <property type="nucleotide sequence ID" value="NC_010382.1"/>
</dbReference>
<dbReference type="SMR" id="B1HST2"/>
<dbReference type="EnsemblBacteria" id="ACA41140">
    <property type="protein sequence ID" value="ACA41140"/>
    <property type="gene ID" value="Bsph_3656"/>
</dbReference>
<dbReference type="KEGG" id="lsp:Bsph_3656"/>
<dbReference type="HOGENOM" id="CLU_029631_0_0_9"/>
<dbReference type="UniPathway" id="UPA00834">
    <property type="reaction ID" value="UER00712"/>
</dbReference>
<dbReference type="Proteomes" id="UP000002164">
    <property type="component" value="Chromosome"/>
</dbReference>
<dbReference type="GO" id="GO:0005886">
    <property type="term" value="C:plasma membrane"/>
    <property type="evidence" value="ECO:0007669"/>
    <property type="project" value="UniProtKB-SubCell"/>
</dbReference>
<dbReference type="GO" id="GO:0008495">
    <property type="term" value="F:protoheme IX farnesyltransferase activity"/>
    <property type="evidence" value="ECO:0007669"/>
    <property type="project" value="UniProtKB-UniRule"/>
</dbReference>
<dbReference type="GO" id="GO:0048034">
    <property type="term" value="P:heme O biosynthetic process"/>
    <property type="evidence" value="ECO:0007669"/>
    <property type="project" value="UniProtKB-UniRule"/>
</dbReference>
<dbReference type="CDD" id="cd13957">
    <property type="entry name" value="PT_UbiA_Cox10"/>
    <property type="match status" value="1"/>
</dbReference>
<dbReference type="Gene3D" id="1.10.357.140">
    <property type="entry name" value="UbiA prenyltransferase"/>
    <property type="match status" value="1"/>
</dbReference>
<dbReference type="HAMAP" id="MF_00154">
    <property type="entry name" value="CyoE_CtaB"/>
    <property type="match status" value="1"/>
</dbReference>
<dbReference type="InterPro" id="IPR006369">
    <property type="entry name" value="Protohaem_IX_farnesylTrfase"/>
</dbReference>
<dbReference type="InterPro" id="IPR000537">
    <property type="entry name" value="UbiA_prenyltransferase"/>
</dbReference>
<dbReference type="InterPro" id="IPR030470">
    <property type="entry name" value="UbiA_prenylTrfase_CS"/>
</dbReference>
<dbReference type="InterPro" id="IPR044878">
    <property type="entry name" value="UbiA_sf"/>
</dbReference>
<dbReference type="NCBIfam" id="TIGR01473">
    <property type="entry name" value="cyoE_ctaB"/>
    <property type="match status" value="1"/>
</dbReference>
<dbReference type="PANTHER" id="PTHR43448">
    <property type="entry name" value="PROTOHEME IX FARNESYLTRANSFERASE, MITOCHONDRIAL"/>
    <property type="match status" value="1"/>
</dbReference>
<dbReference type="PANTHER" id="PTHR43448:SF2">
    <property type="entry name" value="PROTOHEME IX FARNESYLTRANSFERASE, MITOCHONDRIAL"/>
    <property type="match status" value="1"/>
</dbReference>
<dbReference type="Pfam" id="PF01040">
    <property type="entry name" value="UbiA"/>
    <property type="match status" value="1"/>
</dbReference>
<dbReference type="PROSITE" id="PS00943">
    <property type="entry name" value="UBIA"/>
    <property type="match status" value="1"/>
</dbReference>